<protein>
    <recommendedName>
        <fullName evidence="1">Large ribosomal subunit protein eL38</fullName>
    </recommendedName>
    <alternativeName>
        <fullName>60S ribosomal protein L38</fullName>
    </alternativeName>
</protein>
<keyword id="KW-0687">Ribonucleoprotein</keyword>
<keyword id="KW-0689">Ribosomal protein</keyword>
<accession>Q56FC8</accession>
<proteinExistence type="inferred from homology"/>
<feature type="chain" id="PRO_0000319562" description="Large ribosomal subunit protein eL38">
    <location>
        <begin position="1"/>
        <end position="76"/>
    </location>
</feature>
<comment type="similarity">
    <text evidence="1">Belongs to the eukaryotic ribosomal protein eL38 family.</text>
</comment>
<name>RL38_LYSTE</name>
<sequence>MPREIKEIKDFLVTARRKDAKSVKIKKNAENVKFKVRCSRFLYTLVITDKEKAEKLKQSLPPGLQVKEVKKTNEKL</sequence>
<organism>
    <name type="scientific">Lysiphlebus testaceipes</name>
    <name type="common">Greenbugs aphid parastoid</name>
    <dbReference type="NCBI Taxonomy" id="77504"/>
    <lineage>
        <taxon>Eukaryota</taxon>
        <taxon>Metazoa</taxon>
        <taxon>Ecdysozoa</taxon>
        <taxon>Arthropoda</taxon>
        <taxon>Hexapoda</taxon>
        <taxon>Insecta</taxon>
        <taxon>Pterygota</taxon>
        <taxon>Neoptera</taxon>
        <taxon>Endopterygota</taxon>
        <taxon>Hymenoptera</taxon>
        <taxon>Apocrita</taxon>
        <taxon>Ichneumonoidea</taxon>
        <taxon>Braconidae</taxon>
        <taxon>Aphidiinae</taxon>
        <taxon>Lysiphlebus</taxon>
    </lineage>
</organism>
<gene>
    <name type="primary">RpL38</name>
</gene>
<reference key="1">
    <citation type="submission" date="2005-03" db="EMBL/GenBank/DDBJ databases">
        <title>Ribosomal protein sequences from Lysiphlebus testaceipes.</title>
        <authorList>
            <person name="Weathersbee A.A. III"/>
            <person name="Hunter W.B."/>
            <person name="Panchal T.D."/>
            <person name="Dang P.M."/>
        </authorList>
    </citation>
    <scope>NUCLEOTIDE SEQUENCE [MRNA]</scope>
    <source>
        <strain>Florida</strain>
    </source>
</reference>
<dbReference type="EMBL" id="AY961572">
    <property type="protein sequence ID" value="AAX62474.1"/>
    <property type="molecule type" value="mRNA"/>
</dbReference>
<dbReference type="SMR" id="Q56FC8"/>
<dbReference type="GO" id="GO:0022625">
    <property type="term" value="C:cytosolic large ribosomal subunit"/>
    <property type="evidence" value="ECO:0007669"/>
    <property type="project" value="TreeGrafter"/>
</dbReference>
<dbReference type="GO" id="GO:0003735">
    <property type="term" value="F:structural constituent of ribosome"/>
    <property type="evidence" value="ECO:0007669"/>
    <property type="project" value="InterPro"/>
</dbReference>
<dbReference type="GO" id="GO:0022618">
    <property type="term" value="P:protein-RNA complex assembly"/>
    <property type="evidence" value="ECO:0007669"/>
    <property type="project" value="TreeGrafter"/>
</dbReference>
<dbReference type="GO" id="GO:0006412">
    <property type="term" value="P:translation"/>
    <property type="evidence" value="ECO:0007669"/>
    <property type="project" value="InterPro"/>
</dbReference>
<dbReference type="FunFam" id="3.30.720.90:FF:000001">
    <property type="entry name" value="60S ribosomal protein L38"/>
    <property type="match status" value="1"/>
</dbReference>
<dbReference type="Gene3D" id="3.30.720.90">
    <property type="match status" value="1"/>
</dbReference>
<dbReference type="InterPro" id="IPR002675">
    <property type="entry name" value="Ribosomal_eL38"/>
</dbReference>
<dbReference type="InterPro" id="IPR038464">
    <property type="entry name" value="Ribosomal_eL38_sf"/>
</dbReference>
<dbReference type="PANTHER" id="PTHR10965">
    <property type="entry name" value="60S RIBOSOMAL PROTEIN L38"/>
    <property type="match status" value="1"/>
</dbReference>
<dbReference type="PANTHER" id="PTHR10965:SF0">
    <property type="entry name" value="LARGE RIBOSOMAL SUBUNIT PROTEIN EL38"/>
    <property type="match status" value="1"/>
</dbReference>
<dbReference type="Pfam" id="PF01781">
    <property type="entry name" value="Ribosomal_L38e"/>
    <property type="match status" value="1"/>
</dbReference>
<evidence type="ECO:0000305" key="1"/>